<organism>
    <name type="scientific">Mus musculus</name>
    <name type="common">Mouse</name>
    <dbReference type="NCBI Taxonomy" id="10090"/>
    <lineage>
        <taxon>Eukaryota</taxon>
        <taxon>Metazoa</taxon>
        <taxon>Chordata</taxon>
        <taxon>Craniata</taxon>
        <taxon>Vertebrata</taxon>
        <taxon>Euteleostomi</taxon>
        <taxon>Mammalia</taxon>
        <taxon>Eutheria</taxon>
        <taxon>Euarchontoglires</taxon>
        <taxon>Glires</taxon>
        <taxon>Rodentia</taxon>
        <taxon>Myomorpha</taxon>
        <taxon>Muroidea</taxon>
        <taxon>Muridae</taxon>
        <taxon>Murinae</taxon>
        <taxon>Mus</taxon>
        <taxon>Mus</taxon>
    </lineage>
</organism>
<dbReference type="EMBL" id="AF288813">
    <property type="protein sequence ID" value="AAG10200.1"/>
    <property type="molecule type" value="mRNA"/>
</dbReference>
<dbReference type="EMBL" id="AK031466">
    <property type="protein sequence ID" value="BAC27418.1"/>
    <property type="molecule type" value="mRNA"/>
</dbReference>
<dbReference type="EMBL" id="AK080192">
    <property type="protein sequence ID" value="BAC37844.1"/>
    <property type="molecule type" value="mRNA"/>
</dbReference>
<dbReference type="EMBL" id="AK155282">
    <property type="protein sequence ID" value="BAE33163.1"/>
    <property type="molecule type" value="mRNA"/>
</dbReference>
<dbReference type="EMBL" id="AK167746">
    <property type="protein sequence ID" value="BAE39783.1"/>
    <property type="molecule type" value="mRNA"/>
</dbReference>
<dbReference type="EMBL" id="AK169367">
    <property type="protein sequence ID" value="BAE41115.1"/>
    <property type="molecule type" value="mRNA"/>
</dbReference>
<dbReference type="EMBL" id="BC022917">
    <property type="protein sequence ID" value="AAH22917.1"/>
    <property type="molecule type" value="mRNA"/>
</dbReference>
<dbReference type="CCDS" id="CCDS21988.1"/>
<dbReference type="RefSeq" id="NP_444424.1">
    <property type="nucleotide sequence ID" value="NM_053194.4"/>
</dbReference>
<dbReference type="SMR" id="Q3TIR3"/>
<dbReference type="BioGRID" id="221670">
    <property type="interactions" value="10"/>
</dbReference>
<dbReference type="FunCoup" id="Q3TIR3">
    <property type="interactions" value="3805"/>
</dbReference>
<dbReference type="IntAct" id="Q3TIR3">
    <property type="interactions" value="1"/>
</dbReference>
<dbReference type="STRING" id="10090.ENSMUSP00000026558"/>
<dbReference type="ChEMBL" id="CHEMBL4879461"/>
<dbReference type="iPTMnet" id="Q3TIR3"/>
<dbReference type="PhosphoSitePlus" id="Q3TIR3"/>
<dbReference type="SwissPalm" id="Q3TIR3"/>
<dbReference type="jPOST" id="Q3TIR3"/>
<dbReference type="PaxDb" id="10090-ENSMUSP00000026558"/>
<dbReference type="PeptideAtlas" id="Q3TIR3"/>
<dbReference type="ProteomicsDB" id="255338"/>
<dbReference type="Pumba" id="Q3TIR3"/>
<dbReference type="ABCD" id="Q3TIR3">
    <property type="antibodies" value="3 sequenced antibodies"/>
</dbReference>
<dbReference type="Antibodypedia" id="22381">
    <property type="antibodies" value="297 antibodies from 35 providers"/>
</dbReference>
<dbReference type="DNASU" id="101489"/>
<dbReference type="Ensembl" id="ENSMUST00000026558.7">
    <property type="protein sequence ID" value="ENSMUSP00000026558.7"/>
    <property type="gene ID" value="ENSMUSG00000025485.14"/>
</dbReference>
<dbReference type="GeneID" id="101489"/>
<dbReference type="KEGG" id="mmu:101489"/>
<dbReference type="UCSC" id="uc009kij.1">
    <property type="organism name" value="mouse"/>
</dbReference>
<dbReference type="AGR" id="MGI:2141866"/>
<dbReference type="CTD" id="60626"/>
<dbReference type="MGI" id="MGI:2141866">
    <property type="gene designation" value="Ric8a"/>
</dbReference>
<dbReference type="VEuPathDB" id="HostDB:ENSMUSG00000025485"/>
<dbReference type="eggNOG" id="KOG4464">
    <property type="taxonomic scope" value="Eukaryota"/>
</dbReference>
<dbReference type="GeneTree" id="ENSGT00390000014700"/>
<dbReference type="HOGENOM" id="CLU_018602_1_0_1"/>
<dbReference type="InParanoid" id="Q3TIR3"/>
<dbReference type="OMA" id="NADPIFT"/>
<dbReference type="OrthoDB" id="5585685at2759"/>
<dbReference type="PhylomeDB" id="Q3TIR3"/>
<dbReference type="TreeFam" id="TF314907"/>
<dbReference type="BioGRID-ORCS" id="101489">
    <property type="hits" value="22 hits in 80 CRISPR screens"/>
</dbReference>
<dbReference type="PRO" id="PR:Q3TIR3"/>
<dbReference type="Proteomes" id="UP000000589">
    <property type="component" value="Chromosome 7"/>
</dbReference>
<dbReference type="RNAct" id="Q3TIR3">
    <property type="molecule type" value="protein"/>
</dbReference>
<dbReference type="Bgee" id="ENSMUSG00000025485">
    <property type="expression patterns" value="Expressed in paneth cell and 266 other cell types or tissues"/>
</dbReference>
<dbReference type="ExpressionAtlas" id="Q3TIR3">
    <property type="expression patterns" value="baseline and differential"/>
</dbReference>
<dbReference type="GO" id="GO:0005938">
    <property type="term" value="C:cell cortex"/>
    <property type="evidence" value="ECO:0007669"/>
    <property type="project" value="UniProtKB-SubCell"/>
</dbReference>
<dbReference type="GO" id="GO:0005737">
    <property type="term" value="C:cytoplasm"/>
    <property type="evidence" value="ECO:0000250"/>
    <property type="project" value="UniProtKB"/>
</dbReference>
<dbReference type="GO" id="GO:0005829">
    <property type="term" value="C:cytosol"/>
    <property type="evidence" value="ECO:0000266"/>
    <property type="project" value="MGI"/>
</dbReference>
<dbReference type="GO" id="GO:0016020">
    <property type="term" value="C:membrane"/>
    <property type="evidence" value="ECO:0000314"/>
    <property type="project" value="MGI"/>
</dbReference>
<dbReference type="GO" id="GO:0005886">
    <property type="term" value="C:plasma membrane"/>
    <property type="evidence" value="ECO:0000314"/>
    <property type="project" value="UniProtKB"/>
</dbReference>
<dbReference type="GO" id="GO:0001965">
    <property type="term" value="F:G-protein alpha-subunit binding"/>
    <property type="evidence" value="ECO:0000314"/>
    <property type="project" value="UniProtKB"/>
</dbReference>
<dbReference type="GO" id="GO:0005096">
    <property type="term" value="F:GTPase activator activity"/>
    <property type="evidence" value="ECO:0000266"/>
    <property type="project" value="MGI"/>
</dbReference>
<dbReference type="GO" id="GO:0005085">
    <property type="term" value="F:guanyl-nucleotide exchange factor activity"/>
    <property type="evidence" value="ECO:0000250"/>
    <property type="project" value="UniProtKB"/>
</dbReference>
<dbReference type="GO" id="GO:0044183">
    <property type="term" value="F:protein folding chaperone"/>
    <property type="evidence" value="ECO:0000314"/>
    <property type="project" value="UniProtKB"/>
</dbReference>
<dbReference type="GO" id="GO:0007193">
    <property type="term" value="P:adenylate cyclase-inhibiting G protein-coupled receptor signaling pathway"/>
    <property type="evidence" value="ECO:0000314"/>
    <property type="project" value="MGI"/>
</dbReference>
<dbReference type="GO" id="GO:0071711">
    <property type="term" value="P:basement membrane organization"/>
    <property type="evidence" value="ECO:0000315"/>
    <property type="project" value="MGI"/>
</dbReference>
<dbReference type="GO" id="GO:0042074">
    <property type="term" value="P:cell migration involved in gastrulation"/>
    <property type="evidence" value="ECO:0000315"/>
    <property type="project" value="MGI"/>
</dbReference>
<dbReference type="GO" id="GO:0070586">
    <property type="term" value="P:cell-cell adhesion involved in gastrulation"/>
    <property type="evidence" value="ECO:0000315"/>
    <property type="project" value="MGI"/>
</dbReference>
<dbReference type="GO" id="GO:0007186">
    <property type="term" value="P:G protein-coupled receptor signaling pathway"/>
    <property type="evidence" value="ECO:0000314"/>
    <property type="project" value="UniProtKB"/>
</dbReference>
<dbReference type="GO" id="GO:0007369">
    <property type="term" value="P:gastrulation"/>
    <property type="evidence" value="ECO:0000315"/>
    <property type="project" value="MGI"/>
</dbReference>
<dbReference type="GO" id="GO:0001701">
    <property type="term" value="P:in utero embryonic development"/>
    <property type="evidence" value="ECO:0000315"/>
    <property type="project" value="MGI"/>
</dbReference>
<dbReference type="GO" id="GO:0008277">
    <property type="term" value="P:regulation of G protein-coupled receptor signaling pathway"/>
    <property type="evidence" value="ECO:0000266"/>
    <property type="project" value="MGI"/>
</dbReference>
<dbReference type="GO" id="GO:0009416">
    <property type="term" value="P:response to light stimulus"/>
    <property type="evidence" value="ECO:0000315"/>
    <property type="project" value="MGI"/>
</dbReference>
<dbReference type="GO" id="GO:0001944">
    <property type="term" value="P:vasculature development"/>
    <property type="evidence" value="ECO:0000315"/>
    <property type="project" value="MGI"/>
</dbReference>
<dbReference type="GO" id="GO:0008542">
    <property type="term" value="P:visual learning"/>
    <property type="evidence" value="ECO:0000315"/>
    <property type="project" value="MGI"/>
</dbReference>
<dbReference type="FunFam" id="1.25.10.10:FF:000447">
    <property type="entry name" value="RIC8 guanine nucleotide exchange factor A"/>
    <property type="match status" value="1"/>
</dbReference>
<dbReference type="Gene3D" id="1.25.10.10">
    <property type="entry name" value="Leucine-rich Repeat Variant"/>
    <property type="match status" value="1"/>
</dbReference>
<dbReference type="InterPro" id="IPR011989">
    <property type="entry name" value="ARM-like"/>
</dbReference>
<dbReference type="InterPro" id="IPR016024">
    <property type="entry name" value="ARM-type_fold"/>
</dbReference>
<dbReference type="InterPro" id="IPR008376">
    <property type="entry name" value="Chaperone_Ric-8_A/B"/>
</dbReference>
<dbReference type="InterPro" id="IPR019318">
    <property type="entry name" value="Gua_nucleotide_exch_fac_Ric8"/>
</dbReference>
<dbReference type="PANTHER" id="PTHR12425">
    <property type="entry name" value="SYNEMBRYN"/>
    <property type="match status" value="1"/>
</dbReference>
<dbReference type="PANTHER" id="PTHR12425:SF4">
    <property type="entry name" value="SYNEMBRYN-A"/>
    <property type="match status" value="1"/>
</dbReference>
<dbReference type="Pfam" id="PF10165">
    <property type="entry name" value="Ric8"/>
    <property type="match status" value="1"/>
</dbReference>
<dbReference type="PRINTS" id="PR01802">
    <property type="entry name" value="SYNEMBRYN"/>
</dbReference>
<dbReference type="SUPFAM" id="SSF48371">
    <property type="entry name" value="ARM repeat"/>
    <property type="match status" value="1"/>
</dbReference>
<protein>
    <recommendedName>
        <fullName evidence="9">Chaperone Ric-8A</fullName>
    </recommendedName>
    <alternativeName>
        <fullName evidence="8">Synembryn-A</fullName>
    </alternativeName>
</protein>
<name>RIC8A_MOUSE</name>
<feature type="chain" id="PRO_0000235892" description="Chaperone Ric-8A">
    <location>
        <begin position="1"/>
        <end position="530"/>
    </location>
</feature>
<feature type="modified residue" description="Phosphoserine" evidence="7 11 12">
    <location>
        <position position="435"/>
    </location>
</feature>
<feature type="modified residue" description="Phosphothreonine" evidence="7 12">
    <location>
        <position position="440"/>
    </location>
</feature>
<feature type="modified residue" description="Phosphothreonine" evidence="12">
    <location>
        <position position="442"/>
    </location>
</feature>
<feature type="modified residue" description="Phosphoserine" evidence="2">
    <location>
        <position position="501"/>
    </location>
</feature>
<feature type="modified residue" description="Phosphoserine" evidence="2">
    <location>
        <position position="522"/>
    </location>
</feature>
<feature type="modified residue" description="Phosphoserine" evidence="2">
    <location>
        <position position="523"/>
    </location>
</feature>
<feature type="modified residue" description="Phosphoserine" evidence="2">
    <location>
        <position position="527"/>
    </location>
</feature>
<feature type="sequence conflict" description="In Ref. 2; BAE41115." evidence="9" ref="2">
    <original>Q</original>
    <variation>R</variation>
    <location>
        <position position="87"/>
    </location>
</feature>
<feature type="sequence conflict" description="In Ref. 2; BAE39783." evidence="9" ref="2">
    <original>T</original>
    <variation>A</variation>
    <location>
        <position position="274"/>
    </location>
</feature>
<feature type="sequence conflict" description="In Ref. 2; BAE39783." evidence="9" ref="2">
    <original>K</original>
    <variation>E</variation>
    <location>
        <position position="449"/>
    </location>
</feature>
<gene>
    <name evidence="10" type="primary">Ric8a</name>
    <name evidence="8" type="synonym">Ric8</name>
</gene>
<accession>Q3TIR3</accession>
<accession>Q3TEY3</accession>
<accession>Q99JW0</accession>
<accession>Q9ERR6</accession>
<evidence type="ECO:0000250" key="1">
    <source>
        <dbReference type="UniProtKB" id="Q80ZG1"/>
    </source>
</evidence>
<evidence type="ECO:0000250" key="2">
    <source>
        <dbReference type="UniProtKB" id="Q9NPQ8"/>
    </source>
</evidence>
<evidence type="ECO:0000269" key="3">
    <source>
    </source>
</evidence>
<evidence type="ECO:0000269" key="4">
    <source>
    </source>
</evidence>
<evidence type="ECO:0000269" key="5">
    <source>
    </source>
</evidence>
<evidence type="ECO:0000269" key="6">
    <source>
    </source>
</evidence>
<evidence type="ECO:0000269" key="7">
    <source>
    </source>
</evidence>
<evidence type="ECO:0000303" key="8">
    <source>
    </source>
</evidence>
<evidence type="ECO:0000305" key="9"/>
<evidence type="ECO:0000312" key="10">
    <source>
        <dbReference type="MGI" id="MGI:2141866"/>
    </source>
</evidence>
<evidence type="ECO:0007744" key="11">
    <source>
    </source>
</evidence>
<evidence type="ECO:0007744" key="12">
    <source>
    </source>
</evidence>
<reference key="1">
    <citation type="journal article" date="2000" name="Neuron">
        <title>RIC-8 (Synembryn): a novel conserved protein that is required for Gq alpha signaling in the C. elegans nervous system.</title>
        <authorList>
            <person name="Miller K.G."/>
            <person name="Emerson M.D."/>
            <person name="McManus J.R."/>
            <person name="Rand J.B."/>
        </authorList>
    </citation>
    <scope>NUCLEOTIDE SEQUENCE [MRNA]</scope>
</reference>
<reference key="2">
    <citation type="journal article" date="2005" name="Science">
        <title>The transcriptional landscape of the mammalian genome.</title>
        <authorList>
            <person name="Carninci P."/>
            <person name="Kasukawa T."/>
            <person name="Katayama S."/>
            <person name="Gough J."/>
            <person name="Frith M.C."/>
            <person name="Maeda N."/>
            <person name="Oyama R."/>
            <person name="Ravasi T."/>
            <person name="Lenhard B."/>
            <person name="Wells C."/>
            <person name="Kodzius R."/>
            <person name="Shimokawa K."/>
            <person name="Bajic V.B."/>
            <person name="Brenner S.E."/>
            <person name="Batalov S."/>
            <person name="Forrest A.R."/>
            <person name="Zavolan M."/>
            <person name="Davis M.J."/>
            <person name="Wilming L.G."/>
            <person name="Aidinis V."/>
            <person name="Allen J.E."/>
            <person name="Ambesi-Impiombato A."/>
            <person name="Apweiler R."/>
            <person name="Aturaliya R.N."/>
            <person name="Bailey T.L."/>
            <person name="Bansal M."/>
            <person name="Baxter L."/>
            <person name="Beisel K.W."/>
            <person name="Bersano T."/>
            <person name="Bono H."/>
            <person name="Chalk A.M."/>
            <person name="Chiu K.P."/>
            <person name="Choudhary V."/>
            <person name="Christoffels A."/>
            <person name="Clutterbuck D.R."/>
            <person name="Crowe M.L."/>
            <person name="Dalla E."/>
            <person name="Dalrymple B.P."/>
            <person name="de Bono B."/>
            <person name="Della Gatta G."/>
            <person name="di Bernardo D."/>
            <person name="Down T."/>
            <person name="Engstrom P."/>
            <person name="Fagiolini M."/>
            <person name="Faulkner G."/>
            <person name="Fletcher C.F."/>
            <person name="Fukushima T."/>
            <person name="Furuno M."/>
            <person name="Futaki S."/>
            <person name="Gariboldi M."/>
            <person name="Georgii-Hemming P."/>
            <person name="Gingeras T.R."/>
            <person name="Gojobori T."/>
            <person name="Green R.E."/>
            <person name="Gustincich S."/>
            <person name="Harbers M."/>
            <person name="Hayashi Y."/>
            <person name="Hensch T.K."/>
            <person name="Hirokawa N."/>
            <person name="Hill D."/>
            <person name="Huminiecki L."/>
            <person name="Iacono M."/>
            <person name="Ikeo K."/>
            <person name="Iwama A."/>
            <person name="Ishikawa T."/>
            <person name="Jakt M."/>
            <person name="Kanapin A."/>
            <person name="Katoh M."/>
            <person name="Kawasawa Y."/>
            <person name="Kelso J."/>
            <person name="Kitamura H."/>
            <person name="Kitano H."/>
            <person name="Kollias G."/>
            <person name="Krishnan S.P."/>
            <person name="Kruger A."/>
            <person name="Kummerfeld S.K."/>
            <person name="Kurochkin I.V."/>
            <person name="Lareau L.F."/>
            <person name="Lazarevic D."/>
            <person name="Lipovich L."/>
            <person name="Liu J."/>
            <person name="Liuni S."/>
            <person name="McWilliam S."/>
            <person name="Madan Babu M."/>
            <person name="Madera M."/>
            <person name="Marchionni L."/>
            <person name="Matsuda H."/>
            <person name="Matsuzawa S."/>
            <person name="Miki H."/>
            <person name="Mignone F."/>
            <person name="Miyake S."/>
            <person name="Morris K."/>
            <person name="Mottagui-Tabar S."/>
            <person name="Mulder N."/>
            <person name="Nakano N."/>
            <person name="Nakauchi H."/>
            <person name="Ng P."/>
            <person name="Nilsson R."/>
            <person name="Nishiguchi S."/>
            <person name="Nishikawa S."/>
            <person name="Nori F."/>
            <person name="Ohara O."/>
            <person name="Okazaki Y."/>
            <person name="Orlando V."/>
            <person name="Pang K.C."/>
            <person name="Pavan W.J."/>
            <person name="Pavesi G."/>
            <person name="Pesole G."/>
            <person name="Petrovsky N."/>
            <person name="Piazza S."/>
            <person name="Reed J."/>
            <person name="Reid J.F."/>
            <person name="Ring B.Z."/>
            <person name="Ringwald M."/>
            <person name="Rost B."/>
            <person name="Ruan Y."/>
            <person name="Salzberg S.L."/>
            <person name="Sandelin A."/>
            <person name="Schneider C."/>
            <person name="Schoenbach C."/>
            <person name="Sekiguchi K."/>
            <person name="Semple C.A."/>
            <person name="Seno S."/>
            <person name="Sessa L."/>
            <person name="Sheng Y."/>
            <person name="Shibata Y."/>
            <person name="Shimada H."/>
            <person name="Shimada K."/>
            <person name="Silva D."/>
            <person name="Sinclair B."/>
            <person name="Sperling S."/>
            <person name="Stupka E."/>
            <person name="Sugiura K."/>
            <person name="Sultana R."/>
            <person name="Takenaka Y."/>
            <person name="Taki K."/>
            <person name="Tammoja K."/>
            <person name="Tan S.L."/>
            <person name="Tang S."/>
            <person name="Taylor M.S."/>
            <person name="Tegner J."/>
            <person name="Teichmann S.A."/>
            <person name="Ueda H.R."/>
            <person name="van Nimwegen E."/>
            <person name="Verardo R."/>
            <person name="Wei C.L."/>
            <person name="Yagi K."/>
            <person name="Yamanishi H."/>
            <person name="Zabarovsky E."/>
            <person name="Zhu S."/>
            <person name="Zimmer A."/>
            <person name="Hide W."/>
            <person name="Bult C."/>
            <person name="Grimmond S.M."/>
            <person name="Teasdale R.D."/>
            <person name="Liu E.T."/>
            <person name="Brusic V."/>
            <person name="Quackenbush J."/>
            <person name="Wahlestedt C."/>
            <person name="Mattick J.S."/>
            <person name="Hume D.A."/>
            <person name="Kai C."/>
            <person name="Sasaki D."/>
            <person name="Tomaru Y."/>
            <person name="Fukuda S."/>
            <person name="Kanamori-Katayama M."/>
            <person name="Suzuki M."/>
            <person name="Aoki J."/>
            <person name="Arakawa T."/>
            <person name="Iida J."/>
            <person name="Imamura K."/>
            <person name="Itoh M."/>
            <person name="Kato T."/>
            <person name="Kawaji H."/>
            <person name="Kawagashira N."/>
            <person name="Kawashima T."/>
            <person name="Kojima M."/>
            <person name="Kondo S."/>
            <person name="Konno H."/>
            <person name="Nakano K."/>
            <person name="Ninomiya N."/>
            <person name="Nishio T."/>
            <person name="Okada M."/>
            <person name="Plessy C."/>
            <person name="Shibata K."/>
            <person name="Shiraki T."/>
            <person name="Suzuki S."/>
            <person name="Tagami M."/>
            <person name="Waki K."/>
            <person name="Watahiki A."/>
            <person name="Okamura-Oho Y."/>
            <person name="Suzuki H."/>
            <person name="Kawai J."/>
            <person name="Hayashizaki Y."/>
        </authorList>
    </citation>
    <scope>NUCLEOTIDE SEQUENCE [LARGE SCALE MRNA]</scope>
    <source>
        <strain>C57BL/6J</strain>
        <strain>DBA/2J</strain>
        <strain>NOD</strain>
        <tissue>Aorta</tissue>
        <tissue>Testis</tissue>
        <tissue>Vein</tissue>
    </source>
</reference>
<reference key="3">
    <citation type="journal article" date="2004" name="Genome Res.">
        <title>The status, quality, and expansion of the NIH full-length cDNA project: the Mammalian Gene Collection (MGC).</title>
        <authorList>
            <consortium name="The MGC Project Team"/>
        </authorList>
    </citation>
    <scope>NUCLEOTIDE SEQUENCE [LARGE SCALE MRNA]</scope>
    <source>
        <strain>FVB/N</strain>
        <tissue>Mammary tumor</tissue>
    </source>
</reference>
<reference key="4">
    <citation type="journal article" date="2003" name="Gene Expr. Patterns">
        <title>Expression of ric-8 (synembryn) gene in the nervous system of developing and adult mouse.</title>
        <authorList>
            <person name="Tonissoo T."/>
            <person name="Meier R."/>
            <person name="Talts K."/>
            <person name="Plaas M."/>
            <person name="Karis A."/>
        </authorList>
    </citation>
    <scope>TISSUE SPECIFICITY</scope>
    <scope>DEVELOPMENTAL STAGE</scope>
</reference>
<reference key="5">
    <citation type="journal article" date="2006" name="Behav. Brain Res.">
        <title>Heterozygous mice with Ric-8 mutation exhibit impaired spatial memory and decreased anxiety.</title>
        <authorList>
            <person name="Tonissoo T."/>
            <person name="Koks S."/>
            <person name="Meier R."/>
            <person name="Raud S."/>
            <person name="Plaas M."/>
            <person name="Vasar E."/>
            <person name="Karis A."/>
        </authorList>
    </citation>
    <scope>DISRUPTION PHENOTYPE</scope>
</reference>
<reference key="6">
    <citation type="journal article" date="2007" name="Proc. Natl. Acad. Sci. U.S.A.">
        <title>Large-scale phosphorylation analysis of mouse liver.</title>
        <authorList>
            <person name="Villen J."/>
            <person name="Beausoleil S.A."/>
            <person name="Gerber S.A."/>
            <person name="Gygi S.P."/>
        </authorList>
    </citation>
    <scope>PHOSPHORYLATION [LARGE SCALE ANALYSIS] AT SER-435</scope>
    <scope>IDENTIFICATION BY MASS SPECTROMETRY [LARGE SCALE ANALYSIS]</scope>
    <source>
        <tissue>Liver</tissue>
    </source>
</reference>
<reference key="7">
    <citation type="journal article" date="2010" name="Cell">
        <title>A tissue-specific atlas of mouse protein phosphorylation and expression.</title>
        <authorList>
            <person name="Huttlin E.L."/>
            <person name="Jedrychowski M.P."/>
            <person name="Elias J.E."/>
            <person name="Goswami T."/>
            <person name="Rad R."/>
            <person name="Beausoleil S.A."/>
            <person name="Villen J."/>
            <person name="Haas W."/>
            <person name="Sowa M.E."/>
            <person name="Gygi S.P."/>
        </authorList>
    </citation>
    <scope>PHOSPHORYLATION [LARGE SCALE ANALYSIS] AT SER-435; THR-440 AND THR-442</scope>
    <scope>IDENTIFICATION BY MASS SPECTROMETRY [LARGE SCALE ANALYSIS]</scope>
    <source>
        <tissue>Brain</tissue>
        <tissue>Brown adipose tissue</tissue>
        <tissue>Heart</tissue>
        <tissue>Kidney</tissue>
        <tissue>Liver</tissue>
        <tissue>Lung</tissue>
        <tissue>Pancreas</tissue>
        <tissue>Spleen</tissue>
        <tissue>Testis</tissue>
    </source>
</reference>
<reference key="8">
    <citation type="journal article" date="2011" name="Biochemistry">
        <title>Activation of the regulator of G protein signaling 14-Galphai1-GDP signaling complex is regulated by resistance to inhibitors of cholinesterase-8A.</title>
        <authorList>
            <person name="Vellano C.P."/>
            <person name="Shu F.J."/>
            <person name="Ramineni S."/>
            <person name="Yates C.K."/>
            <person name="Tall G.G."/>
            <person name="Hepler J.R."/>
        </authorList>
    </citation>
    <scope>TISSUE SPECIFICITY</scope>
</reference>
<reference key="9">
    <citation type="journal article" date="2011" name="Sci. Signal.">
        <title>Ric-8 proteins are molecular chaperones that direct nascent G protein alpha subunit membrane association.</title>
        <authorList>
            <person name="Gabay M."/>
            <person name="Pinter M.E."/>
            <person name="Wright F.A."/>
            <person name="Chan P."/>
            <person name="Murphy A.J."/>
            <person name="Valenzuela D.M."/>
            <person name="Yancopoulos G.D."/>
            <person name="Tall G.G."/>
        </authorList>
    </citation>
    <scope>FUNCTION</scope>
    <scope>SUBCELLULAR LOCATION</scope>
    <scope>DISRUPTION PHENOTYPE</scope>
</reference>
<reference key="10">
    <citation type="journal article" date="2018" name="Sci. Signal.">
        <title>Dual phosphorylation of Ric-8A enhances its ability to mediate G protein alpha subunit folding and to stimulate guanine nucleotide exchange.</title>
        <authorList>
            <person name="Papasergi-Scott M.M."/>
            <person name="Stoveken H.M."/>
            <person name="MacConnachie L."/>
            <person name="Chan P.-Y."/>
            <person name="Gabay M."/>
            <person name="Wong D."/>
            <person name="Freeman R.S."/>
            <person name="Beg A.A."/>
            <person name="Tall G.G."/>
        </authorList>
    </citation>
    <scope>PHOSPHORYLATION AT SER-435 AND THR-440</scope>
</reference>
<proteinExistence type="evidence at protein level"/>
<comment type="function">
    <text evidence="1 2 6">Chaperone that specifically binds and folds nascent G alpha proteins prior to G protein heterotrimer formation, promoting their stability and activity: folds GNAI1, GNAO1, GNA13 and GNAQ (PubMed:22114146). Does not fold G(s) G-alpha proteins GNAS nor GNAL (PubMed:22114146). Also acts as a guanine nucleotide exchange factor (GEF) for G alpha proteins by stimulating exchange of bound GDP for free GTP (By similarity). Involved in regulation of microtubule pulling forces during mitotic movement of chromosomes by stimulating G(i)-alpha protein (GNAI1), possibly leading to release G(i)-alpha-GTP and NuMA proteins from the NuMA-GPSM2-G(i)-alpha-GDP complex (By similarity). Also acts as an activator for G(q)-alpha (GNAQ) protein by enhancing the G(q)-coupled receptor-mediated ERK activation (By similarity).</text>
</comment>
<comment type="subunit">
    <text evidence="1 2">Interacts with GDP-bound G alpha proteins GNAI1, GNAO1 and GNAQ, and with GNA13 with lower affinity (By similarity). Does not interact with G-alpha proteins when they are in complex with subunits beta and gamma (By similarity). Interacts (via C-terminus) with RGS14; the interaction stimulates the dissociation of the complex between RGS14 and the active GTP-bound form of GNAI1 (By similarity). Interacts with NCS1; interaction is favored in the absence of Ca(2+) and myristoylation of NCS1 is not required (By similarity).</text>
</comment>
<comment type="subcellular location">
    <subcellularLocation>
        <location evidence="6">Cytoplasm</location>
        <location evidence="6">Cell cortex</location>
    </subcellularLocation>
    <subcellularLocation>
        <location evidence="1">Cytoplasm</location>
    </subcellularLocation>
</comment>
<comment type="tissue specificity">
    <text evidence="3 5">Expressed in neurons and neurites of the CA1 and CA2 subregions of the hippocampus (at protein level). In adult brain, it is expressed in the neocortex, hippocampus and cerebellum as well as in the pineal gland and ependymal layer.</text>
</comment>
<comment type="developmental stage">
    <text evidence="3">During the early development (9.5-12.0 dpc) it is expressed in the developing nervous system such as the cranial ganglia, neural tube, sympathetic chain and dorsal root ganglia. Also found in the lens, vomeronasal organ and endolymphatic sac.</text>
</comment>
<comment type="disruption phenotype">
    <text evidence="4 6">Death during early embryonic development (PubMed:16221497, PubMed:22114146). Heterozygous mice exhibit impaired spatial memory and decreased anxiety (PubMed:16221497).</text>
</comment>
<comment type="similarity">
    <text evidence="9">Belongs to the synembryn family.</text>
</comment>
<sequence>MEPRAVADALETGEEDAVTEALRSFNREHSQSFTFDDAQQEDRKRLAKLLVSVLEQGLSPKHRVTWLQTIRILSRDRSCLDSFASRQSLHALACYADITVSEEPIPQSPDMDVLLESLKCLCNLVLSSPTAQMLAAEARLVVRLAERVGLYRKRSYPHEVQFFDLRLLFLLTALRTDVRQQLFQELHGVRLLTDALELTLGVAPKENPPVMLPAQETERAMEILKVLFNITFDSVKREVDEEDAALYRYLGTLLRHCVMVEAAGDRTEEFHGHTVNLLGNLPLKCLDVLLALELHEGSLEFMGVNMDVISALLAFLEKRLHQTHRLKECVAPVLNVLTECARMHRPARKFLKAQVLPPLRDVRTRPEVGDLLRNKLVRLMTHLDTDVKRVAAEFLFVLCSESVPRFIKYTGYGNAAGLLAARGLMAGGRPEGQYSEDEDTDTEEYREAKASINPVTGRVEEKPPNPMEGMTEEQKEHEAMKLVNMFDKLSRHRVIQPMGMSPRGHLTSLQDAMCETMEGQLSSDPDSDPD</sequence>
<keyword id="KW-0143">Chaperone</keyword>
<keyword id="KW-0963">Cytoplasm</keyword>
<keyword id="KW-0344">Guanine-nucleotide releasing factor</keyword>
<keyword id="KW-0597">Phosphoprotein</keyword>
<keyword id="KW-1185">Reference proteome</keyword>